<name>MUTL_BACCQ</name>
<dbReference type="EMBL" id="CP000227">
    <property type="protein sequence ID" value="ACM13982.1"/>
    <property type="molecule type" value="Genomic_DNA"/>
</dbReference>
<dbReference type="SMR" id="B9IV58"/>
<dbReference type="KEGG" id="bcq:BCQ_3554"/>
<dbReference type="HOGENOM" id="CLU_004131_4_1_9"/>
<dbReference type="Proteomes" id="UP000000441">
    <property type="component" value="Chromosome"/>
</dbReference>
<dbReference type="GO" id="GO:0032300">
    <property type="term" value="C:mismatch repair complex"/>
    <property type="evidence" value="ECO:0007669"/>
    <property type="project" value="InterPro"/>
</dbReference>
<dbReference type="GO" id="GO:0005524">
    <property type="term" value="F:ATP binding"/>
    <property type="evidence" value="ECO:0007669"/>
    <property type="project" value="InterPro"/>
</dbReference>
<dbReference type="GO" id="GO:0016887">
    <property type="term" value="F:ATP hydrolysis activity"/>
    <property type="evidence" value="ECO:0007669"/>
    <property type="project" value="InterPro"/>
</dbReference>
<dbReference type="GO" id="GO:0140664">
    <property type="term" value="F:ATP-dependent DNA damage sensor activity"/>
    <property type="evidence" value="ECO:0007669"/>
    <property type="project" value="InterPro"/>
</dbReference>
<dbReference type="GO" id="GO:0030983">
    <property type="term" value="F:mismatched DNA binding"/>
    <property type="evidence" value="ECO:0007669"/>
    <property type="project" value="InterPro"/>
</dbReference>
<dbReference type="GO" id="GO:0006298">
    <property type="term" value="P:mismatch repair"/>
    <property type="evidence" value="ECO:0007669"/>
    <property type="project" value="UniProtKB-UniRule"/>
</dbReference>
<dbReference type="CDD" id="cd16926">
    <property type="entry name" value="HATPase_MutL-MLH-PMS-like"/>
    <property type="match status" value="1"/>
</dbReference>
<dbReference type="CDD" id="cd00782">
    <property type="entry name" value="MutL_Trans"/>
    <property type="match status" value="1"/>
</dbReference>
<dbReference type="FunFam" id="3.30.1370.100:FF:000004">
    <property type="entry name" value="DNA mismatch repair endonuclease MutL"/>
    <property type="match status" value="1"/>
</dbReference>
<dbReference type="FunFam" id="3.30.230.10:FF:000036">
    <property type="entry name" value="DNA mismatch repair endonuclease MutL"/>
    <property type="match status" value="1"/>
</dbReference>
<dbReference type="FunFam" id="3.30.565.10:FF:000003">
    <property type="entry name" value="DNA mismatch repair endonuclease MutL"/>
    <property type="match status" value="1"/>
</dbReference>
<dbReference type="Gene3D" id="3.30.230.10">
    <property type="match status" value="1"/>
</dbReference>
<dbReference type="Gene3D" id="3.30.565.10">
    <property type="entry name" value="Histidine kinase-like ATPase, C-terminal domain"/>
    <property type="match status" value="1"/>
</dbReference>
<dbReference type="Gene3D" id="3.30.1540.20">
    <property type="entry name" value="MutL, C-terminal domain, dimerisation subdomain"/>
    <property type="match status" value="1"/>
</dbReference>
<dbReference type="Gene3D" id="3.30.1370.100">
    <property type="entry name" value="MutL, C-terminal domain, regulatory subdomain"/>
    <property type="match status" value="1"/>
</dbReference>
<dbReference type="HAMAP" id="MF_00149">
    <property type="entry name" value="DNA_mis_repair"/>
    <property type="match status" value="1"/>
</dbReference>
<dbReference type="InterPro" id="IPR014762">
    <property type="entry name" value="DNA_mismatch_repair_CS"/>
</dbReference>
<dbReference type="InterPro" id="IPR020667">
    <property type="entry name" value="DNA_mismatch_repair_MutL"/>
</dbReference>
<dbReference type="InterPro" id="IPR013507">
    <property type="entry name" value="DNA_mismatch_S5_2-like"/>
</dbReference>
<dbReference type="InterPro" id="IPR036890">
    <property type="entry name" value="HATPase_C_sf"/>
</dbReference>
<dbReference type="InterPro" id="IPR002099">
    <property type="entry name" value="MutL/Mlh/PMS"/>
</dbReference>
<dbReference type="InterPro" id="IPR038973">
    <property type="entry name" value="MutL/Mlh/Pms-like"/>
</dbReference>
<dbReference type="InterPro" id="IPR014790">
    <property type="entry name" value="MutL_C"/>
</dbReference>
<dbReference type="InterPro" id="IPR042120">
    <property type="entry name" value="MutL_C_dimsub"/>
</dbReference>
<dbReference type="InterPro" id="IPR042121">
    <property type="entry name" value="MutL_C_regsub"/>
</dbReference>
<dbReference type="InterPro" id="IPR037198">
    <property type="entry name" value="MutL_C_sf"/>
</dbReference>
<dbReference type="InterPro" id="IPR020568">
    <property type="entry name" value="Ribosomal_Su5_D2-typ_SF"/>
</dbReference>
<dbReference type="InterPro" id="IPR014721">
    <property type="entry name" value="Ribsml_uS5_D2-typ_fold_subgr"/>
</dbReference>
<dbReference type="NCBIfam" id="TIGR00585">
    <property type="entry name" value="mutl"/>
    <property type="match status" value="1"/>
</dbReference>
<dbReference type="NCBIfam" id="NF000950">
    <property type="entry name" value="PRK00095.1-3"/>
    <property type="match status" value="1"/>
</dbReference>
<dbReference type="PANTHER" id="PTHR10073">
    <property type="entry name" value="DNA MISMATCH REPAIR PROTEIN MLH, PMS, MUTL"/>
    <property type="match status" value="1"/>
</dbReference>
<dbReference type="PANTHER" id="PTHR10073:SF12">
    <property type="entry name" value="DNA MISMATCH REPAIR PROTEIN MLH1"/>
    <property type="match status" value="1"/>
</dbReference>
<dbReference type="Pfam" id="PF01119">
    <property type="entry name" value="DNA_mis_repair"/>
    <property type="match status" value="1"/>
</dbReference>
<dbReference type="Pfam" id="PF13589">
    <property type="entry name" value="HATPase_c_3"/>
    <property type="match status" value="1"/>
</dbReference>
<dbReference type="Pfam" id="PF08676">
    <property type="entry name" value="MutL_C"/>
    <property type="match status" value="1"/>
</dbReference>
<dbReference type="SMART" id="SM01340">
    <property type="entry name" value="DNA_mis_repair"/>
    <property type="match status" value="1"/>
</dbReference>
<dbReference type="SMART" id="SM00853">
    <property type="entry name" value="MutL_C"/>
    <property type="match status" value="1"/>
</dbReference>
<dbReference type="SUPFAM" id="SSF55874">
    <property type="entry name" value="ATPase domain of HSP90 chaperone/DNA topoisomerase II/histidine kinase"/>
    <property type="match status" value="1"/>
</dbReference>
<dbReference type="SUPFAM" id="SSF118116">
    <property type="entry name" value="DNA mismatch repair protein MutL"/>
    <property type="match status" value="1"/>
</dbReference>
<dbReference type="SUPFAM" id="SSF54211">
    <property type="entry name" value="Ribosomal protein S5 domain 2-like"/>
    <property type="match status" value="1"/>
</dbReference>
<dbReference type="PROSITE" id="PS00058">
    <property type="entry name" value="DNA_MISMATCH_REPAIR_1"/>
    <property type="match status" value="1"/>
</dbReference>
<accession>B9IV58</accession>
<organism>
    <name type="scientific">Bacillus cereus (strain Q1)</name>
    <dbReference type="NCBI Taxonomy" id="361100"/>
    <lineage>
        <taxon>Bacteria</taxon>
        <taxon>Bacillati</taxon>
        <taxon>Bacillota</taxon>
        <taxon>Bacilli</taxon>
        <taxon>Bacillales</taxon>
        <taxon>Bacillaceae</taxon>
        <taxon>Bacillus</taxon>
        <taxon>Bacillus cereus group</taxon>
    </lineage>
</organism>
<proteinExistence type="inferred from homology"/>
<sequence length="647" mass="74049">MGKIRKLDDQLSNLIAAGEVVERPASVVKELVENSIDANSTSIEIHLEEAGLSKIRIIDNGDGIAEEDCIVAFERHATSKIKDENDLFRIRTLGFRGEALPSIASVSELELITSTGDAPGTHLIIKGGDIIKQEKTASRKGTDITVQNLFFNTPARLKYMKTIHTELGNITDIVYRIAMSHPEVSLKLFHNEKKLLHTSGNGDVRQVLASIYSIQVAKKLVPIEAESLDFTIKGYVTLPEVTRASRNYMSTIVNGRYVRNFVLMKAIQQGYHTLLPVGRYPIGFLSIEMDPMLVDVNVHPAKLEVRFSKEQELLKLIEETLQAAFKKIQLIPDAGVTTKKKEKDESVQEQFKFEHAKPKEPSMPEIVLPTGMDEKQEEPQAVKQPAQLWQPPKQEWQPPQSLVREEQSWQPSTKSIIEEPIREEKSWNSNDEDFELEELEEEVQEIEEIEMNGNDLPPLYPIGQMHGTYIFAQNDKGLYMIDQHAAQERINYEYFRDKVGRVAQEVQELLVPYRIDLSLTEFLRVEEQLEELKKVGLFLEQFGHQSFIVRSHPTWFPKGQETEIIDEMMEQVVKLKKVDIKKLREEAAIMMSCKASIKANQYLTNDQIFALLEELRTTTNPYTCPHGRPILVHHSTYELEKMFKRVM</sequence>
<reference key="1">
    <citation type="journal article" date="2009" name="J. Bacteriol.">
        <title>Complete genome sequence of the extremophilic Bacillus cereus strain Q1 with industrial applications.</title>
        <authorList>
            <person name="Xiong Z."/>
            <person name="Jiang Y."/>
            <person name="Qi D."/>
            <person name="Lu H."/>
            <person name="Yang F."/>
            <person name="Yang J."/>
            <person name="Chen L."/>
            <person name="Sun L."/>
            <person name="Xu X."/>
            <person name="Xue Y."/>
            <person name="Zhu Y."/>
            <person name="Jin Q."/>
        </authorList>
    </citation>
    <scope>NUCLEOTIDE SEQUENCE [LARGE SCALE GENOMIC DNA]</scope>
    <source>
        <strain>Q1</strain>
    </source>
</reference>
<feature type="chain" id="PRO_1000192161" description="DNA mismatch repair protein MutL">
    <location>
        <begin position="1"/>
        <end position="647"/>
    </location>
</feature>
<protein>
    <recommendedName>
        <fullName evidence="1">DNA mismatch repair protein MutL</fullName>
    </recommendedName>
</protein>
<gene>
    <name evidence="1" type="primary">mutL</name>
    <name type="ordered locus">BCQ_3554</name>
</gene>
<keyword id="KW-0227">DNA damage</keyword>
<keyword id="KW-0234">DNA repair</keyword>
<evidence type="ECO:0000255" key="1">
    <source>
        <dbReference type="HAMAP-Rule" id="MF_00149"/>
    </source>
</evidence>
<comment type="function">
    <text evidence="1">This protein is involved in the repair of mismatches in DNA. It is required for dam-dependent methyl-directed DNA mismatch repair. May act as a 'molecular matchmaker', a protein that promotes the formation of a stable complex between two or more DNA-binding proteins in an ATP-dependent manner without itself being part of a final effector complex.</text>
</comment>
<comment type="similarity">
    <text evidence="1">Belongs to the DNA mismatch repair MutL/HexB family.</text>
</comment>